<gene>
    <name evidence="10" type="primary">cka-2</name>
    <name evidence="10" type="ORF">C52B9.1</name>
</gene>
<reference evidence="6" key="1">
    <citation type="journal article" date="2003" name="Biochim. Biophys. Acta">
        <title>Multiple isoforms of choline kinase from Caenorhabditis elegans: cloning, expression, purification, and characterization.</title>
        <authorList>
            <person name="Gee P."/>
            <person name="Kent C."/>
        </authorList>
    </citation>
    <scope>NUCLEOTIDE SEQUENCE [MRNA] (ISOFORM A)</scope>
    <scope>FUNCTION</scope>
    <scope>CATALYTIC ACTIVITY</scope>
    <scope>COFACTOR</scope>
    <scope>BIOPHYSICOCHEMICAL PROPERTIES</scope>
    <scope>PATHWAY</scope>
    <scope>SUBUNIT</scope>
</reference>
<reference evidence="9" key="2">
    <citation type="journal article" date="1998" name="Science">
        <title>Genome sequence of the nematode C. elegans: a platform for investigating biology.</title>
        <authorList>
            <consortium name="The C. elegans sequencing consortium"/>
        </authorList>
    </citation>
    <scope>NUCLEOTIDE SEQUENCE [LARGE SCALE GENOMIC DNA]</scope>
    <scope>ALTERNATIVE SPLICING</scope>
    <source>
        <strain evidence="9">Bristol N2</strain>
    </source>
</reference>
<reference evidence="6" key="3">
    <citation type="journal article" date="2004" name="J. Biol. Chem.">
        <title>Identification of critical residues of choline kinase A2 from Caenorhabditis elegans.</title>
        <authorList>
            <person name="Yuan C."/>
            <person name="Kent C."/>
        </authorList>
    </citation>
    <scope>CATALYTIC ACTIVITY</scope>
    <scope>COFACTOR</scope>
    <scope>ACTIVITY REGULATION</scope>
    <scope>BIOPHYSICOCHEMICAL PROPERTIES</scope>
    <scope>MUTAGENESIS OF SER-86; ARG-111; GLU-125; HIS-253; ASN-254; ASP-255; ASN-260; ASP-301; GLU-303; GLU-320 AND TRP-387</scope>
</reference>
<reference evidence="8" key="4">
    <citation type="journal article" date="2003" name="Structure">
        <title>The crystal structure of choline kinase reveals a eukaryotic protein kinase fold.</title>
        <authorList>
            <person name="Peisach D."/>
            <person name="Gee P."/>
            <person name="Kent C."/>
            <person name="Xu Z."/>
        </authorList>
    </citation>
    <scope>X-RAY CRYSTALLOGRAPHY (2.02 ANGSTROMS) IN COMPLEX WITH CALCIUM</scope>
    <scope>SUBUNIT</scope>
</reference>
<evidence type="ECO:0000250" key="1">
    <source>
        <dbReference type="UniProtKB" id="P35790"/>
    </source>
</evidence>
<evidence type="ECO:0000269" key="2">
    <source>
    </source>
</evidence>
<evidence type="ECO:0000269" key="3">
    <source>
    </source>
</evidence>
<evidence type="ECO:0000269" key="4">
    <source>
    </source>
</evidence>
<evidence type="ECO:0000303" key="5">
    <source>
    </source>
</evidence>
<evidence type="ECO:0000305" key="6"/>
<evidence type="ECO:0000305" key="7">
    <source>
    </source>
</evidence>
<evidence type="ECO:0000312" key="8">
    <source>
        <dbReference type="PDB" id="1NW1"/>
    </source>
</evidence>
<evidence type="ECO:0000312" key="9">
    <source>
        <dbReference type="Proteomes" id="UP000001940"/>
    </source>
</evidence>
<evidence type="ECO:0000312" key="10">
    <source>
        <dbReference type="WormBase" id="C52B9.1a"/>
    </source>
</evidence>
<evidence type="ECO:0000312" key="11">
    <source>
        <dbReference type="WormBase" id="C52B9.1b"/>
    </source>
</evidence>
<evidence type="ECO:0007744" key="12">
    <source>
        <dbReference type="PDB" id="1NW1"/>
    </source>
</evidence>
<evidence type="ECO:0007829" key="13">
    <source>
        <dbReference type="PDB" id="1NW1"/>
    </source>
</evidence>
<name>CKA2_CAEEL</name>
<accession>Q22942</accession>
<accession>Q2XN11</accession>
<dbReference type="EC" id="2.7.1.32" evidence="2 4"/>
<dbReference type="EC" id="2.7.1.82" evidence="2"/>
<dbReference type="EMBL" id="FO080644">
    <property type="protein sequence ID" value="CCD65407.1"/>
    <property type="molecule type" value="Genomic_DNA"/>
</dbReference>
<dbReference type="EMBL" id="FO080644">
    <property type="protein sequence ID" value="CCD65408.1"/>
    <property type="molecule type" value="Genomic_DNA"/>
</dbReference>
<dbReference type="RefSeq" id="NP_001024480.1">
    <molecule id="Q22942-1"/>
    <property type="nucleotide sequence ID" value="NM_001029309.6"/>
</dbReference>
<dbReference type="RefSeq" id="NP_001024481.1">
    <molecule id="Q22942-2"/>
    <property type="nucleotide sequence ID" value="NM_001029310.7"/>
</dbReference>
<dbReference type="PDB" id="1NW1">
    <property type="method" value="X-ray"/>
    <property type="resolution" value="2.02 A"/>
    <property type="chains" value="A/B=1-429"/>
</dbReference>
<dbReference type="PDBsum" id="1NW1"/>
<dbReference type="SMR" id="Q22942"/>
<dbReference type="FunCoup" id="Q22942">
    <property type="interactions" value="1649"/>
</dbReference>
<dbReference type="STRING" id="6239.C52B9.1a.1"/>
<dbReference type="PaxDb" id="6239-C52B9.1a"/>
<dbReference type="PeptideAtlas" id="Q22942"/>
<dbReference type="EnsemblMetazoa" id="C52B9.1a.1">
    <molecule id="Q22942-1"/>
    <property type="protein sequence ID" value="C52B9.1a.1"/>
    <property type="gene ID" value="WBGene00000510"/>
</dbReference>
<dbReference type="EnsemblMetazoa" id="C52B9.1b.1">
    <molecule id="Q22942-2"/>
    <property type="protein sequence ID" value="C52B9.1b.1"/>
    <property type="gene ID" value="WBGene00000510"/>
</dbReference>
<dbReference type="EnsemblMetazoa" id="C52B9.1b.2">
    <molecule id="Q22942-2"/>
    <property type="protein sequence ID" value="C52B9.1b.2"/>
    <property type="gene ID" value="WBGene00000510"/>
</dbReference>
<dbReference type="GeneID" id="180703"/>
<dbReference type="KEGG" id="cel:CELE_C52B9.1"/>
<dbReference type="UCSC" id="C52B9.1a">
    <property type="organism name" value="c. elegans"/>
</dbReference>
<dbReference type="AGR" id="WB:WBGene00000510"/>
<dbReference type="CTD" id="180703"/>
<dbReference type="WormBase" id="C52B9.1a">
    <molecule id="Q22942-1"/>
    <property type="protein sequence ID" value="CE27113"/>
    <property type="gene ID" value="WBGene00000510"/>
    <property type="gene designation" value="cka-2"/>
</dbReference>
<dbReference type="WormBase" id="C52B9.1b">
    <molecule id="Q22942-2"/>
    <property type="protein sequence ID" value="CE38493"/>
    <property type="gene ID" value="WBGene00000510"/>
    <property type="gene designation" value="cka-2"/>
</dbReference>
<dbReference type="eggNOG" id="KOG2686">
    <property type="taxonomic scope" value="Eukaryota"/>
</dbReference>
<dbReference type="GeneTree" id="ENSGT00950000182939"/>
<dbReference type="InParanoid" id="Q22942"/>
<dbReference type="OMA" id="PLSCHEI"/>
<dbReference type="OrthoDB" id="3649325at2759"/>
<dbReference type="PhylomeDB" id="Q22942"/>
<dbReference type="Reactome" id="R-CEL-1483191">
    <property type="pathway name" value="Synthesis of PC"/>
</dbReference>
<dbReference type="Reactome" id="R-CEL-1483213">
    <property type="pathway name" value="Synthesis of PE"/>
</dbReference>
<dbReference type="UniPathway" id="UPA00558">
    <property type="reaction ID" value="UER00741"/>
</dbReference>
<dbReference type="UniPathway" id="UPA00753">
    <property type="reaction ID" value="UER00737"/>
</dbReference>
<dbReference type="EvolutionaryTrace" id="Q22942"/>
<dbReference type="PRO" id="PR:Q22942"/>
<dbReference type="Proteomes" id="UP000001940">
    <property type="component" value="Chromosome X"/>
</dbReference>
<dbReference type="Bgee" id="WBGene00000510">
    <property type="expression patterns" value="Expressed in pharyngeal muscle cell (C elegans) and 3 other cell types or tissues"/>
</dbReference>
<dbReference type="GO" id="GO:0005737">
    <property type="term" value="C:cytoplasm"/>
    <property type="evidence" value="ECO:0000318"/>
    <property type="project" value="GO_Central"/>
</dbReference>
<dbReference type="GO" id="GO:0005524">
    <property type="term" value="F:ATP binding"/>
    <property type="evidence" value="ECO:0007669"/>
    <property type="project" value="UniProtKB-KW"/>
</dbReference>
<dbReference type="GO" id="GO:0004103">
    <property type="term" value="F:choline kinase activity"/>
    <property type="evidence" value="ECO:0000314"/>
    <property type="project" value="WormBase"/>
</dbReference>
<dbReference type="GO" id="GO:0004305">
    <property type="term" value="F:ethanolamine kinase activity"/>
    <property type="evidence" value="ECO:0000318"/>
    <property type="project" value="GO_Central"/>
</dbReference>
<dbReference type="GO" id="GO:0046872">
    <property type="term" value="F:metal ion binding"/>
    <property type="evidence" value="ECO:0007669"/>
    <property type="project" value="UniProtKB-KW"/>
</dbReference>
<dbReference type="GO" id="GO:0006657">
    <property type="term" value="P:CDP-choline pathway"/>
    <property type="evidence" value="ECO:0000314"/>
    <property type="project" value="WormBase"/>
</dbReference>
<dbReference type="GO" id="GO:0006646">
    <property type="term" value="P:phosphatidylethanolamine biosynthetic process"/>
    <property type="evidence" value="ECO:0000318"/>
    <property type="project" value="GO_Central"/>
</dbReference>
<dbReference type="CDD" id="cd05156">
    <property type="entry name" value="ChoK_euk"/>
    <property type="match status" value="1"/>
</dbReference>
<dbReference type="DisProt" id="DP02987"/>
<dbReference type="Gene3D" id="3.90.1200.10">
    <property type="match status" value="1"/>
</dbReference>
<dbReference type="Gene3D" id="3.30.200.20">
    <property type="entry name" value="Phosphorylase Kinase, domain 1"/>
    <property type="match status" value="1"/>
</dbReference>
<dbReference type="InterPro" id="IPR011009">
    <property type="entry name" value="Kinase-like_dom_sf"/>
</dbReference>
<dbReference type="PANTHER" id="PTHR22603:SF98">
    <property type="entry name" value="CHOLINE KINASE A2"/>
    <property type="match status" value="1"/>
</dbReference>
<dbReference type="PANTHER" id="PTHR22603">
    <property type="entry name" value="CHOLINE/ETHANOALAMINE KINASE"/>
    <property type="match status" value="1"/>
</dbReference>
<dbReference type="Pfam" id="PF01633">
    <property type="entry name" value="Choline_kinase"/>
    <property type="match status" value="1"/>
</dbReference>
<dbReference type="SUPFAM" id="SSF56112">
    <property type="entry name" value="Protein kinase-like (PK-like)"/>
    <property type="match status" value="1"/>
</dbReference>
<keyword id="KW-0002">3D-structure</keyword>
<keyword id="KW-0025">Alternative splicing</keyword>
<keyword id="KW-0067">ATP-binding</keyword>
<keyword id="KW-0106">Calcium</keyword>
<keyword id="KW-0418">Kinase</keyword>
<keyword id="KW-0444">Lipid biosynthesis</keyword>
<keyword id="KW-0443">Lipid metabolism</keyword>
<keyword id="KW-0460">Magnesium</keyword>
<keyword id="KW-0479">Metal-binding</keyword>
<keyword id="KW-0547">Nucleotide-binding</keyword>
<keyword id="KW-0594">Phospholipid biosynthesis</keyword>
<keyword id="KW-1208">Phospholipid metabolism</keyword>
<keyword id="KW-1185">Reference proteome</keyword>
<keyword id="KW-0808">Transferase</keyword>
<organism evidence="9">
    <name type="scientific">Caenorhabditis elegans</name>
    <dbReference type="NCBI Taxonomy" id="6239"/>
    <lineage>
        <taxon>Eukaryota</taxon>
        <taxon>Metazoa</taxon>
        <taxon>Ecdysozoa</taxon>
        <taxon>Nematoda</taxon>
        <taxon>Chromadorea</taxon>
        <taxon>Rhabditida</taxon>
        <taxon>Rhabditina</taxon>
        <taxon>Rhabditomorpha</taxon>
        <taxon>Rhabditoidea</taxon>
        <taxon>Rhabditidae</taxon>
        <taxon>Peloderinae</taxon>
        <taxon>Caenorhabditis</taxon>
    </lineage>
</organism>
<feature type="chain" id="PRO_0000432071" description="Choline kinase A2">
    <location>
        <begin position="1"/>
        <end position="429"/>
    </location>
</feature>
<feature type="binding site" evidence="1">
    <location>
        <begin position="82"/>
        <end position="88"/>
    </location>
    <ligand>
        <name>ATP</name>
        <dbReference type="ChEBI" id="CHEBI:30616"/>
    </ligand>
</feature>
<feature type="binding site" evidence="1">
    <location>
        <begin position="84"/>
        <end position="86"/>
    </location>
    <ligand>
        <name>substrate</name>
    </ligand>
</feature>
<feature type="binding site" evidence="1">
    <location>
        <position position="111"/>
    </location>
    <ligand>
        <name>ATP</name>
        <dbReference type="ChEBI" id="CHEBI:30616"/>
    </ligand>
</feature>
<feature type="binding site" evidence="1">
    <location>
        <begin position="152"/>
        <end position="158"/>
    </location>
    <ligand>
        <name>ATP</name>
        <dbReference type="ChEBI" id="CHEBI:30616"/>
    </ligand>
</feature>
<feature type="binding site" evidence="1">
    <location>
        <position position="257"/>
    </location>
    <ligand>
        <name>ATP</name>
        <dbReference type="ChEBI" id="CHEBI:30616"/>
    </ligand>
</feature>
<feature type="binding site" evidence="12">
    <location>
        <position position="258"/>
    </location>
    <ligand>
        <name>Ca(2+)</name>
        <dbReference type="ChEBI" id="CHEBI:29108"/>
    </ligand>
</feature>
<feature type="binding site" evidence="1">
    <location>
        <position position="301"/>
    </location>
    <ligand>
        <name>ATP</name>
        <dbReference type="ChEBI" id="CHEBI:30616"/>
    </ligand>
</feature>
<feature type="binding site" evidence="12">
    <location>
        <position position="320"/>
    </location>
    <ligand>
        <name>Ca(2+)</name>
        <dbReference type="ChEBI" id="CHEBI:29108"/>
    </ligand>
</feature>
<feature type="binding site" evidence="12">
    <location>
        <position position="323"/>
    </location>
    <ligand>
        <name>Ca(2+)</name>
        <dbReference type="ChEBI" id="CHEBI:29108"/>
    </ligand>
</feature>
<feature type="splice variant" id="VSP_057474" description="In isoform b." evidence="6">
    <location>
        <begin position="1"/>
        <end position="21"/>
    </location>
</feature>
<feature type="mutagenesis site" description="Severe decrease in catalytic efficiency." evidence="4">
    <original>S</original>
    <variation>A</variation>
    <location>
        <position position="86"/>
    </location>
</feature>
<feature type="mutagenesis site" description="10-fold reduction in catalytic efficiency for ATP." evidence="4">
    <original>R</original>
    <variation>A</variation>
    <location>
        <position position="111"/>
    </location>
</feature>
<feature type="mutagenesis site" description="Moderate decrease in catalytic efficiency with a 3-fold decrease in the affinity for ATP and for Mg(2+). Activated by low concentrations of Ca(2+) and inhibited by high concentrations of Ca(2+)." evidence="4">
    <original>E</original>
    <variation>A</variation>
    <location>
        <position position="125"/>
    </location>
</feature>
<feature type="mutagenesis site" description="Linear activity for only a short time, suggesting a role in maintaining enzyme conformation." evidence="4">
    <original>H</original>
    <variation>A</variation>
    <location>
        <position position="253"/>
    </location>
</feature>
<feature type="mutagenesis site" description="Linear activity for only a short time, suggesting a role in maintaining enzyme conformation." evidence="4">
    <original>N</original>
    <variation>A</variation>
    <location>
        <position position="254"/>
    </location>
</feature>
<feature type="mutagenesis site" description="Complete loss of activity." evidence="4">
    <original>D</original>
    <variation>A</variation>
    <variation>N</variation>
    <location>
        <position position="255"/>
    </location>
</feature>
<feature type="mutagenesis site" description="Severe decrease in catalytic efficiency with a 5-fold decrease in the affinity for choline." evidence="4">
    <original>D</original>
    <variation>E</variation>
    <location>
        <position position="255"/>
    </location>
</feature>
<feature type="mutagenesis site" description="Severe decrease in catalytic efficiency with a 3-fold decrease in the affinity for ATP and for Mg(2+). No inhibition at high Mg(2+) concentrations. Activated by low concentrations of Ca(2+) and inhibited by high concentrations of Ca(2+)." evidence="4">
    <original>N</original>
    <variation>A</variation>
    <location>
        <position position="260"/>
    </location>
</feature>
<feature type="mutagenesis site" description="Complete loss of activity." evidence="4">
    <original>D</original>
    <variation>A</variation>
    <variation>E</variation>
    <variation>N</variation>
    <location>
        <position position="301"/>
    </location>
</feature>
<feature type="mutagenesis site" description="Severe decrease in catalytic efficiency with a decreased affinity for Mg(2+). No inhibition at high Mg(2+) concentrations. Activated by low concentrations of Ca(2+) and inhibited by high concentrations of Ca(2+)." evidence="4">
    <original>E</original>
    <variation>A</variation>
    <location>
        <position position="303"/>
    </location>
</feature>
<feature type="mutagenesis site" description="Moderate decrease in catalytic efficiency." evidence="4">
    <original>E</original>
    <variation>N</variation>
    <variation>Q</variation>
    <location>
        <position position="303"/>
    </location>
</feature>
<feature type="mutagenesis site" description="Linear activity for only a short time, suggesting a role in maintaining enzyme conformation. Substantial decrease in the affinity for ATP." evidence="4">
    <original>E</original>
    <variation>A</variation>
    <location>
        <position position="320"/>
    </location>
</feature>
<feature type="mutagenesis site" description="Severe decrease in catalytic efficiency but no effect on the affinity for ATP and choline. No inhibition at high Mg(2+) concentrations." evidence="4">
    <original>W</original>
    <variation>A</variation>
    <location>
        <position position="387"/>
    </location>
</feature>
<feature type="helix" evidence="13">
    <location>
        <begin position="33"/>
        <end position="37"/>
    </location>
</feature>
<feature type="helix" evidence="13">
    <location>
        <begin position="46"/>
        <end position="48"/>
    </location>
</feature>
<feature type="helix" evidence="13">
    <location>
        <begin position="50"/>
        <end position="64"/>
    </location>
</feature>
<feature type="helix" evidence="13">
    <location>
        <begin position="67"/>
        <end position="70"/>
    </location>
</feature>
<feature type="helix" evidence="13">
    <location>
        <begin position="73"/>
        <end position="75"/>
    </location>
</feature>
<feature type="strand" evidence="13">
    <location>
        <begin position="76"/>
        <end position="81"/>
    </location>
</feature>
<feature type="strand" evidence="13">
    <location>
        <begin position="87"/>
        <end position="94"/>
    </location>
</feature>
<feature type="strand" evidence="13">
    <location>
        <begin position="101"/>
        <end position="103"/>
    </location>
</feature>
<feature type="strand" evidence="13">
    <location>
        <begin position="106"/>
        <end position="113"/>
    </location>
</feature>
<feature type="helix" evidence="13">
    <location>
        <begin position="119"/>
        <end position="134"/>
    </location>
</feature>
<feature type="strand" evidence="13">
    <location>
        <begin position="137"/>
        <end position="139"/>
    </location>
</feature>
<feature type="strand" evidence="13">
    <location>
        <begin position="141"/>
        <end position="145"/>
    </location>
</feature>
<feature type="strand" evidence="13">
    <location>
        <begin position="148"/>
        <end position="151"/>
    </location>
</feature>
<feature type="strand" evidence="13">
    <location>
        <begin position="156"/>
        <end position="158"/>
    </location>
</feature>
<feature type="helix" evidence="13">
    <location>
        <begin position="163"/>
        <end position="165"/>
    </location>
</feature>
<feature type="helix" evidence="13">
    <location>
        <begin position="167"/>
        <end position="180"/>
    </location>
</feature>
<feature type="helix" evidence="13">
    <location>
        <begin position="193"/>
        <end position="208"/>
    </location>
</feature>
<feature type="helix" evidence="13">
    <location>
        <begin position="219"/>
        <end position="221"/>
    </location>
</feature>
<feature type="helix" evidence="13">
    <location>
        <begin position="228"/>
        <end position="242"/>
    </location>
</feature>
<feature type="strand" evidence="13">
    <location>
        <begin position="249"/>
        <end position="252"/>
    </location>
</feature>
<feature type="helix" evidence="13">
    <location>
        <begin position="258"/>
        <end position="260"/>
    </location>
</feature>
<feature type="strand" evidence="13">
    <location>
        <begin position="261"/>
        <end position="264"/>
    </location>
</feature>
<feature type="strand" evidence="13">
    <location>
        <begin position="306"/>
        <end position="309"/>
    </location>
</feature>
<feature type="helix" evidence="13">
    <location>
        <begin position="310"/>
        <end position="320"/>
    </location>
</feature>
<feature type="helix" evidence="13">
    <location>
        <begin position="337"/>
        <end position="339"/>
    </location>
</feature>
<feature type="helix" evidence="13">
    <location>
        <begin position="343"/>
        <end position="357"/>
    </location>
</feature>
<feature type="helix" evidence="13">
    <location>
        <begin position="362"/>
        <end position="364"/>
    </location>
</feature>
<feature type="helix" evidence="13">
    <location>
        <begin position="365"/>
        <end position="376"/>
    </location>
</feature>
<feature type="helix" evidence="13">
    <location>
        <begin position="377"/>
        <end position="379"/>
    </location>
</feature>
<feature type="helix" evidence="13">
    <location>
        <begin position="380"/>
        <end position="397"/>
    </location>
</feature>
<feature type="strand" evidence="13">
    <location>
        <begin position="400"/>
        <end position="402"/>
    </location>
</feature>
<feature type="helix" evidence="13">
    <location>
        <begin position="404"/>
        <end position="417"/>
    </location>
</feature>
<feature type="helix" evidence="13">
    <location>
        <begin position="419"/>
        <end position="423"/>
    </location>
</feature>
<comment type="function">
    <text evidence="2 4">Catalyzes the first step in phosphatidylcholine biosynthesis. May contribute to phosphatidylethanolamine biosynthesis. Phosphorylates choline and ethanolamine but the activity is much higher with choline.</text>
</comment>
<comment type="catalytic activity">
    <reaction evidence="2 4">
        <text>choline + ATP = phosphocholine + ADP + H(+)</text>
        <dbReference type="Rhea" id="RHEA:12837"/>
        <dbReference type="ChEBI" id="CHEBI:15354"/>
        <dbReference type="ChEBI" id="CHEBI:15378"/>
        <dbReference type="ChEBI" id="CHEBI:30616"/>
        <dbReference type="ChEBI" id="CHEBI:295975"/>
        <dbReference type="ChEBI" id="CHEBI:456216"/>
        <dbReference type="EC" id="2.7.1.32"/>
    </reaction>
</comment>
<comment type="catalytic activity">
    <reaction evidence="2">
        <text>ethanolamine + ATP = phosphoethanolamine + ADP + H(+)</text>
        <dbReference type="Rhea" id="RHEA:13069"/>
        <dbReference type="ChEBI" id="CHEBI:15378"/>
        <dbReference type="ChEBI" id="CHEBI:30616"/>
        <dbReference type="ChEBI" id="CHEBI:57603"/>
        <dbReference type="ChEBI" id="CHEBI:58190"/>
        <dbReference type="ChEBI" id="CHEBI:456216"/>
        <dbReference type="EC" id="2.7.1.82"/>
    </reaction>
</comment>
<comment type="cofactor">
    <cofactor evidence="2 4">
        <name>Mg(2+)</name>
        <dbReference type="ChEBI" id="CHEBI:18420"/>
    </cofactor>
    <text evidence="2">Mn(2+) is a poor substitute (PubMed:12758145).</text>
</comment>
<comment type="activity regulation">
    <text evidence="4">Inhibited by Ca(2+). Mild inhibition by high levels of Mg(2+)(&gt;10 mM) (PubMed:14960577).</text>
</comment>
<comment type="biophysicochemical properties">
    <kinetics>
        <KM evidence="2">1.6 mM for choline (at 37 degrees Celsius and pH 10)</KM>
        <KM evidence="2">2.4 mM for ATP (at 37 degrees Celsius and pH 10)</KM>
        <KM evidence="4">103 uM for Mg(2+) (at 37 degrees Celsius and pH 10)</KM>
        <Vmax evidence="2">90.0 umol/min/mg enzyme (at 37 degrees Celsius and pH 10)</Vmax>
    </kinetics>
    <phDependence>
        <text evidence="2">Optimum pH is 10.</text>
    </phDependence>
</comment>
<comment type="pathway">
    <text evidence="2">Phospholipid metabolism; phosphatidylcholine biosynthesis; phosphocholine from choline: step 1/1.</text>
</comment>
<comment type="pathway">
    <text evidence="7">Phospholipid metabolism; phosphatidylethanolamine biosynthesis; phosphatidylethanolamine from ethanolamine: step 1/3.</text>
</comment>
<comment type="subunit">
    <text evidence="2 3">Homodimer (PubMed:12758145, PubMed:12791258). A small proportion exists as higher oligomers (PubMed:12758145).</text>
</comment>
<comment type="alternative products">
    <event type="alternative splicing"/>
    <isoform>
        <id>Q22942-1</id>
        <name evidence="10">a</name>
        <sequence type="displayed"/>
    </isoform>
    <isoform>
        <id>Q22942-2</id>
        <name evidence="11">b</name>
        <sequence type="described" ref="VSP_057474"/>
    </isoform>
</comment>
<comment type="similarity">
    <text evidence="6">Belongs to the choline/ethanolamine kinase family.</text>
</comment>
<protein>
    <recommendedName>
        <fullName evidence="5">Choline kinase A2</fullName>
        <ecNumber evidence="2 4">2.7.1.32</ecNumber>
    </recommendedName>
    <alternativeName>
        <fullName evidence="5">Ethanolamine kinase</fullName>
        <ecNumber evidence="2">2.7.1.82</ecNumber>
    </alternativeName>
</protein>
<proteinExistence type="evidence at protein level"/>
<sequence>MSSRKVSRAHYDEDELASAANMSLVAEGHFRGMKELLSTMDLDTDANTIPELKERAHMLCARFLGGAWKTVPLEHLRISRIKGGMSNMLFLCRLSEVYPPIRNEPNKVLLRVYFNPETESHLVAESVIFTLLSERHLGPKLYGIFSGGRLEEYIPSRPLSCHEISLAHMSTKIAKRVAKVHQLEVPIWKEPDYLCEALQRWLKQLTGTVDAEHRFDLPEECGVSSVNCLDLARELEFLRAHISLSKSPVTFCHNDLQEGNILLPKASSGNIRMPSLSDETQALGNSLSAFNPADPRLVLIDFEYASYNYRAFDFANHFIEWTIDYDIDEAPFYKIQTENFPENDQMLEFFLNYLREQGNTRENELYKKSEDLVQETLPFVPVSHFFWGVWGLLQVELSPVGFGFADYGRDRLSLYFKHKQLLKNLASHQ</sequence>